<proteinExistence type="inferred from homology"/>
<keyword id="KW-0028">Amino-acid biosynthesis</keyword>
<keyword id="KW-0055">Arginine biosynthesis</keyword>
<keyword id="KW-0067">ATP-binding</keyword>
<keyword id="KW-0963">Cytoplasm</keyword>
<keyword id="KW-0436">Ligase</keyword>
<keyword id="KW-0547">Nucleotide-binding</keyword>
<keyword id="KW-1185">Reference proteome</keyword>
<gene>
    <name evidence="1" type="primary">argG</name>
    <name type="ordered locus">Dshi_3472</name>
</gene>
<feature type="chain" id="PRO_1000073819" description="Argininosuccinate synthase">
    <location>
        <begin position="1"/>
        <end position="406"/>
    </location>
</feature>
<feature type="binding site" evidence="1">
    <location>
        <begin position="10"/>
        <end position="18"/>
    </location>
    <ligand>
        <name>ATP</name>
        <dbReference type="ChEBI" id="CHEBI:30616"/>
    </ligand>
</feature>
<feature type="binding site" evidence="1">
    <location>
        <position position="37"/>
    </location>
    <ligand>
        <name>ATP</name>
        <dbReference type="ChEBI" id="CHEBI:30616"/>
    </ligand>
</feature>
<feature type="binding site" evidence="1">
    <location>
        <position position="88"/>
    </location>
    <ligand>
        <name>L-citrulline</name>
        <dbReference type="ChEBI" id="CHEBI:57743"/>
    </ligand>
</feature>
<feature type="binding site" evidence="1">
    <location>
        <position position="93"/>
    </location>
    <ligand>
        <name>L-citrulline</name>
        <dbReference type="ChEBI" id="CHEBI:57743"/>
    </ligand>
</feature>
<feature type="binding site" evidence="1">
    <location>
        <position position="118"/>
    </location>
    <ligand>
        <name>ATP</name>
        <dbReference type="ChEBI" id="CHEBI:30616"/>
    </ligand>
</feature>
<feature type="binding site" evidence="1">
    <location>
        <position position="120"/>
    </location>
    <ligand>
        <name>L-aspartate</name>
        <dbReference type="ChEBI" id="CHEBI:29991"/>
    </ligand>
</feature>
<feature type="binding site" evidence="1">
    <location>
        <position position="124"/>
    </location>
    <ligand>
        <name>L-aspartate</name>
        <dbReference type="ChEBI" id="CHEBI:29991"/>
    </ligand>
</feature>
<feature type="binding site" evidence="1">
    <location>
        <position position="124"/>
    </location>
    <ligand>
        <name>L-citrulline</name>
        <dbReference type="ChEBI" id="CHEBI:57743"/>
    </ligand>
</feature>
<feature type="binding site" evidence="1">
    <location>
        <position position="125"/>
    </location>
    <ligand>
        <name>L-aspartate</name>
        <dbReference type="ChEBI" id="CHEBI:29991"/>
    </ligand>
</feature>
<feature type="binding site" evidence="1">
    <location>
        <position position="128"/>
    </location>
    <ligand>
        <name>L-citrulline</name>
        <dbReference type="ChEBI" id="CHEBI:57743"/>
    </ligand>
</feature>
<feature type="binding site" evidence="1">
    <location>
        <position position="179"/>
    </location>
    <ligand>
        <name>L-citrulline</name>
        <dbReference type="ChEBI" id="CHEBI:57743"/>
    </ligand>
</feature>
<feature type="binding site" evidence="1">
    <location>
        <position position="188"/>
    </location>
    <ligand>
        <name>L-citrulline</name>
        <dbReference type="ChEBI" id="CHEBI:57743"/>
    </ligand>
</feature>
<feature type="binding site" evidence="1">
    <location>
        <position position="264"/>
    </location>
    <ligand>
        <name>L-citrulline</name>
        <dbReference type="ChEBI" id="CHEBI:57743"/>
    </ligand>
</feature>
<feature type="binding site" evidence="1">
    <location>
        <position position="276"/>
    </location>
    <ligand>
        <name>L-citrulline</name>
        <dbReference type="ChEBI" id="CHEBI:57743"/>
    </ligand>
</feature>
<comment type="catalytic activity">
    <reaction evidence="1">
        <text>L-citrulline + L-aspartate + ATP = 2-(N(omega)-L-arginino)succinate + AMP + diphosphate + H(+)</text>
        <dbReference type="Rhea" id="RHEA:10932"/>
        <dbReference type="ChEBI" id="CHEBI:15378"/>
        <dbReference type="ChEBI" id="CHEBI:29991"/>
        <dbReference type="ChEBI" id="CHEBI:30616"/>
        <dbReference type="ChEBI" id="CHEBI:33019"/>
        <dbReference type="ChEBI" id="CHEBI:57472"/>
        <dbReference type="ChEBI" id="CHEBI:57743"/>
        <dbReference type="ChEBI" id="CHEBI:456215"/>
        <dbReference type="EC" id="6.3.4.5"/>
    </reaction>
</comment>
<comment type="pathway">
    <text evidence="1">Amino-acid biosynthesis; L-arginine biosynthesis; L-arginine from L-ornithine and carbamoyl phosphate: step 2/3.</text>
</comment>
<comment type="subunit">
    <text evidence="1">Homotetramer.</text>
</comment>
<comment type="subcellular location">
    <subcellularLocation>
        <location evidence="1">Cytoplasm</location>
    </subcellularLocation>
</comment>
<comment type="similarity">
    <text evidence="1">Belongs to the argininosuccinate synthase family. Type 1 subfamily.</text>
</comment>
<name>ASSY_DINSH</name>
<organism>
    <name type="scientific">Dinoroseobacter shibae (strain DSM 16493 / NCIMB 14021 / DFL 12)</name>
    <dbReference type="NCBI Taxonomy" id="398580"/>
    <lineage>
        <taxon>Bacteria</taxon>
        <taxon>Pseudomonadati</taxon>
        <taxon>Pseudomonadota</taxon>
        <taxon>Alphaproteobacteria</taxon>
        <taxon>Rhodobacterales</taxon>
        <taxon>Roseobacteraceae</taxon>
        <taxon>Dinoroseobacter</taxon>
    </lineage>
</organism>
<dbReference type="EC" id="6.3.4.5" evidence="1"/>
<dbReference type="EMBL" id="CP000830">
    <property type="protein sequence ID" value="ABV95205.1"/>
    <property type="molecule type" value="Genomic_DNA"/>
</dbReference>
<dbReference type="RefSeq" id="WP_012180129.1">
    <property type="nucleotide sequence ID" value="NC_009952.1"/>
</dbReference>
<dbReference type="SMR" id="A8LPE0"/>
<dbReference type="STRING" id="398580.Dshi_3472"/>
<dbReference type="KEGG" id="dsh:Dshi_3472"/>
<dbReference type="eggNOG" id="COG0137">
    <property type="taxonomic scope" value="Bacteria"/>
</dbReference>
<dbReference type="HOGENOM" id="CLU_032784_4_2_5"/>
<dbReference type="OrthoDB" id="9801641at2"/>
<dbReference type="UniPathway" id="UPA00068">
    <property type="reaction ID" value="UER00113"/>
</dbReference>
<dbReference type="Proteomes" id="UP000006833">
    <property type="component" value="Chromosome"/>
</dbReference>
<dbReference type="GO" id="GO:0005737">
    <property type="term" value="C:cytoplasm"/>
    <property type="evidence" value="ECO:0007669"/>
    <property type="project" value="UniProtKB-SubCell"/>
</dbReference>
<dbReference type="GO" id="GO:0004055">
    <property type="term" value="F:argininosuccinate synthase activity"/>
    <property type="evidence" value="ECO:0007669"/>
    <property type="project" value="UniProtKB-UniRule"/>
</dbReference>
<dbReference type="GO" id="GO:0005524">
    <property type="term" value="F:ATP binding"/>
    <property type="evidence" value="ECO:0007669"/>
    <property type="project" value="UniProtKB-UniRule"/>
</dbReference>
<dbReference type="GO" id="GO:0000053">
    <property type="term" value="P:argininosuccinate metabolic process"/>
    <property type="evidence" value="ECO:0007669"/>
    <property type="project" value="TreeGrafter"/>
</dbReference>
<dbReference type="GO" id="GO:0006526">
    <property type="term" value="P:L-arginine biosynthetic process"/>
    <property type="evidence" value="ECO:0007669"/>
    <property type="project" value="UniProtKB-UniRule"/>
</dbReference>
<dbReference type="GO" id="GO:0000050">
    <property type="term" value="P:urea cycle"/>
    <property type="evidence" value="ECO:0007669"/>
    <property type="project" value="TreeGrafter"/>
</dbReference>
<dbReference type="CDD" id="cd01999">
    <property type="entry name" value="ASS"/>
    <property type="match status" value="1"/>
</dbReference>
<dbReference type="FunFam" id="3.40.50.620:FF:000019">
    <property type="entry name" value="Argininosuccinate synthase"/>
    <property type="match status" value="1"/>
</dbReference>
<dbReference type="FunFam" id="3.90.1260.10:FF:000007">
    <property type="entry name" value="Argininosuccinate synthase"/>
    <property type="match status" value="1"/>
</dbReference>
<dbReference type="Gene3D" id="3.90.1260.10">
    <property type="entry name" value="Argininosuccinate synthetase, chain A, domain 2"/>
    <property type="match status" value="1"/>
</dbReference>
<dbReference type="Gene3D" id="3.40.50.620">
    <property type="entry name" value="HUPs"/>
    <property type="match status" value="1"/>
</dbReference>
<dbReference type="Gene3D" id="1.20.5.470">
    <property type="entry name" value="Single helix bin"/>
    <property type="match status" value="1"/>
</dbReference>
<dbReference type="HAMAP" id="MF_00005">
    <property type="entry name" value="Arg_succ_synth_type1"/>
    <property type="match status" value="1"/>
</dbReference>
<dbReference type="InterPro" id="IPR048268">
    <property type="entry name" value="Arginosuc_syn_C"/>
</dbReference>
<dbReference type="InterPro" id="IPR048267">
    <property type="entry name" value="Arginosuc_syn_N"/>
</dbReference>
<dbReference type="InterPro" id="IPR001518">
    <property type="entry name" value="Arginosuc_synth"/>
</dbReference>
<dbReference type="InterPro" id="IPR018223">
    <property type="entry name" value="Arginosuc_synth_CS"/>
</dbReference>
<dbReference type="InterPro" id="IPR023434">
    <property type="entry name" value="Arginosuc_synth_type_1_subfam"/>
</dbReference>
<dbReference type="InterPro" id="IPR024074">
    <property type="entry name" value="AS_cat/multimer_dom_body"/>
</dbReference>
<dbReference type="InterPro" id="IPR014729">
    <property type="entry name" value="Rossmann-like_a/b/a_fold"/>
</dbReference>
<dbReference type="NCBIfam" id="TIGR00032">
    <property type="entry name" value="argG"/>
    <property type="match status" value="1"/>
</dbReference>
<dbReference type="NCBIfam" id="NF001770">
    <property type="entry name" value="PRK00509.1"/>
    <property type="match status" value="1"/>
</dbReference>
<dbReference type="PANTHER" id="PTHR11587">
    <property type="entry name" value="ARGININOSUCCINATE SYNTHASE"/>
    <property type="match status" value="1"/>
</dbReference>
<dbReference type="PANTHER" id="PTHR11587:SF2">
    <property type="entry name" value="ARGININOSUCCINATE SYNTHASE"/>
    <property type="match status" value="1"/>
</dbReference>
<dbReference type="Pfam" id="PF20979">
    <property type="entry name" value="Arginosuc_syn_C"/>
    <property type="match status" value="1"/>
</dbReference>
<dbReference type="Pfam" id="PF00764">
    <property type="entry name" value="Arginosuc_synth"/>
    <property type="match status" value="1"/>
</dbReference>
<dbReference type="SUPFAM" id="SSF52402">
    <property type="entry name" value="Adenine nucleotide alpha hydrolases-like"/>
    <property type="match status" value="1"/>
</dbReference>
<dbReference type="SUPFAM" id="SSF69864">
    <property type="entry name" value="Argininosuccinate synthetase, C-terminal domain"/>
    <property type="match status" value="1"/>
</dbReference>
<dbReference type="PROSITE" id="PS00564">
    <property type="entry name" value="ARGININOSUCCIN_SYN_1"/>
    <property type="match status" value="1"/>
</dbReference>
<dbReference type="PROSITE" id="PS00565">
    <property type="entry name" value="ARGININOSUCCIN_SYN_2"/>
    <property type="match status" value="1"/>
</dbReference>
<accession>A8LPE0</accession>
<evidence type="ECO:0000255" key="1">
    <source>
        <dbReference type="HAMAP-Rule" id="MF_00005"/>
    </source>
</evidence>
<sequence>MSAPKKVVLAYSGGLDTSIILKWLQTEYDCEVVTFTADLGQGEELEPARAKAEMMGASAIYIEDLREEFVRDFVFPMFRANAVYEGLYLLGTSIARPLISKRLVEIAEAEGADAVAHGATGKGNDQVRFELAAYALNPDIKVIAPWREWDLSSRTKLIDFAEKHQIPIAKDKRGEAPFSVDANLLHTSSEGKVLEDPAEDAPDYVYQRTVNPEDAPNTPEYIEVGFERGDAVSINGEAMSPATVLTKLNELGGAHGIGRLDLVEGRFVGMKSRGIYETPGGTILLEAHRGIEQITLDRGAAHLKDELMPRYAELIYNGFWFSPEREMLQAAIDASQAHVTGTVRLKLYKGSVRTVGRWSDHSLYSEAHVTFEDDAGAYDQKDAAGFIQLNALRLKLLAARNKRLGK</sequence>
<reference key="1">
    <citation type="journal article" date="2010" name="ISME J.">
        <title>The complete genome sequence of the algal symbiont Dinoroseobacter shibae: a hitchhiker's guide to life in the sea.</title>
        <authorList>
            <person name="Wagner-Dobler I."/>
            <person name="Ballhausen B."/>
            <person name="Berger M."/>
            <person name="Brinkhoff T."/>
            <person name="Buchholz I."/>
            <person name="Bunk B."/>
            <person name="Cypionka H."/>
            <person name="Daniel R."/>
            <person name="Drepper T."/>
            <person name="Gerdts G."/>
            <person name="Hahnke S."/>
            <person name="Han C."/>
            <person name="Jahn D."/>
            <person name="Kalhoefer D."/>
            <person name="Kiss H."/>
            <person name="Klenk H.P."/>
            <person name="Kyrpides N."/>
            <person name="Liebl W."/>
            <person name="Liesegang H."/>
            <person name="Meincke L."/>
            <person name="Pati A."/>
            <person name="Petersen J."/>
            <person name="Piekarski T."/>
            <person name="Pommerenke C."/>
            <person name="Pradella S."/>
            <person name="Pukall R."/>
            <person name="Rabus R."/>
            <person name="Stackebrandt E."/>
            <person name="Thole S."/>
            <person name="Thompson L."/>
            <person name="Tielen P."/>
            <person name="Tomasch J."/>
            <person name="von Jan M."/>
            <person name="Wanphrut N."/>
            <person name="Wichels A."/>
            <person name="Zech H."/>
            <person name="Simon M."/>
        </authorList>
    </citation>
    <scope>NUCLEOTIDE SEQUENCE [LARGE SCALE GENOMIC DNA]</scope>
    <source>
        <strain>DSM 16493 / NCIMB 14021 / DFL 12</strain>
    </source>
</reference>
<protein>
    <recommendedName>
        <fullName evidence="1">Argininosuccinate synthase</fullName>
        <ecNumber evidence="1">6.3.4.5</ecNumber>
    </recommendedName>
    <alternativeName>
        <fullName evidence="1">Citrulline--aspartate ligase</fullName>
    </alternativeName>
</protein>